<sequence length="556" mass="58826">MRSDVITKGTKSAPQRALLNALGLTKEEIERPLVGIVSSKNDIVPGHMNLDKIVEAVKTGVSMAGGTPIVFPAIAVCDGIAMGHQGMKYSLVTRDLIADSTEAMAMAHAFDALVMVPNCDKNVPGLLMAAARLNIPTIFVSGGPMLAGKVDGCKVSFSSISEAVGAFNGGKITEEKLEEFESKVCPTCGSCSGMYTANSMNCLTEVLGMALGGNGTIPAVYSDRIKLAKHAGMKIMELLERNIRPRDVMTEAAFKNALTMDMALGCSTNSMLHLPAIAHEAGIELNVDMANEISAKTPNLCHLAPAGHNYVEELNEAGGIYAVMNEINKLNLLSTDLITCTGKTVAENIKGCINKNKEVIRPVENPYSTTGGIAILKGNLAPDSCVVKRSAVAPEMLKHEGPARVFDCEEDALNAINTGKIVAGDVVIIRYEGPKGGPGMREMLNPTSAIMGRGLGGSVALITDGRFSGATRGAAIGHVSPEAAVGGNIALVEEGDIIKIDIEANSIDFEISEEELERRRSNWKPRQPKITTGYLARYASMVTSGNRGAILEIPKF</sequence>
<comment type="function">
    <text evidence="1">Functions in the biosynthesis of branched-chain amino acids. Catalyzes the dehydration of (2R,3R)-2,3-dihydroxy-3-methylpentanoate (2,3-dihydroxy-3-methylvalerate) into 2-oxo-3-methylpentanoate (2-oxo-3-methylvalerate) and of (2R)-2,3-dihydroxy-3-methylbutanoate (2,3-dihydroxyisovalerate) into 2-oxo-3-methylbutanoate (2-oxoisovalerate), the penultimate precursor to L-isoleucine and L-valine, respectively.</text>
</comment>
<comment type="catalytic activity">
    <reaction evidence="1">
        <text>(2R)-2,3-dihydroxy-3-methylbutanoate = 3-methyl-2-oxobutanoate + H2O</text>
        <dbReference type="Rhea" id="RHEA:24809"/>
        <dbReference type="ChEBI" id="CHEBI:11851"/>
        <dbReference type="ChEBI" id="CHEBI:15377"/>
        <dbReference type="ChEBI" id="CHEBI:49072"/>
        <dbReference type="EC" id="4.2.1.9"/>
    </reaction>
    <physiologicalReaction direction="left-to-right" evidence="1">
        <dbReference type="Rhea" id="RHEA:24810"/>
    </physiologicalReaction>
</comment>
<comment type="catalytic activity">
    <reaction evidence="1">
        <text>(2R,3R)-2,3-dihydroxy-3-methylpentanoate = (S)-3-methyl-2-oxopentanoate + H2O</text>
        <dbReference type="Rhea" id="RHEA:27694"/>
        <dbReference type="ChEBI" id="CHEBI:15377"/>
        <dbReference type="ChEBI" id="CHEBI:35146"/>
        <dbReference type="ChEBI" id="CHEBI:49258"/>
        <dbReference type="EC" id="4.2.1.9"/>
    </reaction>
    <physiologicalReaction direction="left-to-right" evidence="1">
        <dbReference type="Rhea" id="RHEA:27695"/>
    </physiologicalReaction>
</comment>
<comment type="cofactor">
    <cofactor evidence="1">
        <name>[2Fe-2S] cluster</name>
        <dbReference type="ChEBI" id="CHEBI:190135"/>
    </cofactor>
    <text evidence="1">Binds 1 [2Fe-2S] cluster per subunit. This cluster acts as a Lewis acid cofactor.</text>
</comment>
<comment type="cofactor">
    <cofactor evidence="1">
        <name>Mg(2+)</name>
        <dbReference type="ChEBI" id="CHEBI:18420"/>
    </cofactor>
</comment>
<comment type="pathway">
    <text evidence="1">Amino-acid biosynthesis; L-isoleucine biosynthesis; L-isoleucine from 2-oxobutanoate: step 3/4.</text>
</comment>
<comment type="pathway">
    <text evidence="1">Amino-acid biosynthesis; L-valine biosynthesis; L-valine from pyruvate: step 3/4.</text>
</comment>
<comment type="subunit">
    <text evidence="1">Homodimer.</text>
</comment>
<comment type="similarity">
    <text evidence="1">Belongs to the IlvD/Edd family.</text>
</comment>
<gene>
    <name evidence="1" type="primary">ilvD</name>
    <name type="ordered locus">CKL_1693</name>
</gene>
<organism>
    <name type="scientific">Clostridium kluyveri (strain ATCC 8527 / DSM 555 / NBRC 12016 / NCIMB 10680 / K1)</name>
    <dbReference type="NCBI Taxonomy" id="431943"/>
    <lineage>
        <taxon>Bacteria</taxon>
        <taxon>Bacillati</taxon>
        <taxon>Bacillota</taxon>
        <taxon>Clostridia</taxon>
        <taxon>Eubacteriales</taxon>
        <taxon>Clostridiaceae</taxon>
        <taxon>Clostridium</taxon>
    </lineage>
</organism>
<protein>
    <recommendedName>
        <fullName evidence="1">Dihydroxy-acid dehydratase</fullName>
        <shortName evidence="1">DAD</shortName>
        <ecNumber evidence="1">4.2.1.9</ecNumber>
    </recommendedName>
</protein>
<feature type="chain" id="PRO_1000073972" description="Dihydroxy-acid dehydratase">
    <location>
        <begin position="1"/>
        <end position="556"/>
    </location>
</feature>
<feature type="active site" description="Proton acceptor" evidence="1">
    <location>
        <position position="468"/>
    </location>
</feature>
<feature type="binding site" evidence="1">
    <location>
        <position position="78"/>
    </location>
    <ligand>
        <name>Mg(2+)</name>
        <dbReference type="ChEBI" id="CHEBI:18420"/>
    </ligand>
</feature>
<feature type="binding site" evidence="1">
    <location>
        <position position="119"/>
    </location>
    <ligand>
        <name>[2Fe-2S] cluster</name>
        <dbReference type="ChEBI" id="CHEBI:190135"/>
    </ligand>
</feature>
<feature type="binding site" evidence="1">
    <location>
        <position position="120"/>
    </location>
    <ligand>
        <name>Mg(2+)</name>
        <dbReference type="ChEBI" id="CHEBI:18420"/>
    </ligand>
</feature>
<feature type="binding site" description="via carbamate group" evidence="1">
    <location>
        <position position="121"/>
    </location>
    <ligand>
        <name>Mg(2+)</name>
        <dbReference type="ChEBI" id="CHEBI:18420"/>
    </ligand>
</feature>
<feature type="binding site" evidence="1">
    <location>
        <position position="191"/>
    </location>
    <ligand>
        <name>[2Fe-2S] cluster</name>
        <dbReference type="ChEBI" id="CHEBI:190135"/>
    </ligand>
</feature>
<feature type="binding site" evidence="1">
    <location>
        <position position="442"/>
    </location>
    <ligand>
        <name>Mg(2+)</name>
        <dbReference type="ChEBI" id="CHEBI:18420"/>
    </ligand>
</feature>
<feature type="modified residue" description="N6-carboxylysine" evidence="1">
    <location>
        <position position="121"/>
    </location>
</feature>
<name>ILVD_CLOK5</name>
<proteinExistence type="inferred from homology"/>
<accession>A5N8V4</accession>
<reference key="1">
    <citation type="journal article" date="2008" name="Proc. Natl. Acad. Sci. U.S.A.">
        <title>The genome of Clostridium kluyveri, a strict anaerobe with unique metabolic features.</title>
        <authorList>
            <person name="Seedorf H."/>
            <person name="Fricke W.F."/>
            <person name="Veith B."/>
            <person name="Brueggemann H."/>
            <person name="Liesegang H."/>
            <person name="Strittmatter A."/>
            <person name="Miethke M."/>
            <person name="Buckel W."/>
            <person name="Hinderberger J."/>
            <person name="Li F."/>
            <person name="Hagemeier C."/>
            <person name="Thauer R.K."/>
            <person name="Gottschalk G."/>
        </authorList>
    </citation>
    <scope>NUCLEOTIDE SEQUENCE [LARGE SCALE GENOMIC DNA]</scope>
    <source>
        <strain>ATCC 8527 / DSM 555 / NBRC 12016 / NCIMB 10680 / K1</strain>
    </source>
</reference>
<evidence type="ECO:0000255" key="1">
    <source>
        <dbReference type="HAMAP-Rule" id="MF_00012"/>
    </source>
</evidence>
<dbReference type="EC" id="4.2.1.9" evidence="1"/>
<dbReference type="EMBL" id="CP000673">
    <property type="protein sequence ID" value="EDK33735.1"/>
    <property type="molecule type" value="Genomic_DNA"/>
</dbReference>
<dbReference type="RefSeq" id="WP_012102089.1">
    <property type="nucleotide sequence ID" value="NC_009706.1"/>
</dbReference>
<dbReference type="SMR" id="A5N8V4"/>
<dbReference type="STRING" id="431943.CKL_1693"/>
<dbReference type="KEGG" id="ckl:CKL_1693"/>
<dbReference type="eggNOG" id="COG0129">
    <property type="taxonomic scope" value="Bacteria"/>
</dbReference>
<dbReference type="HOGENOM" id="CLU_014271_4_2_9"/>
<dbReference type="UniPathway" id="UPA00047">
    <property type="reaction ID" value="UER00057"/>
</dbReference>
<dbReference type="UniPathway" id="UPA00049">
    <property type="reaction ID" value="UER00061"/>
</dbReference>
<dbReference type="Proteomes" id="UP000002411">
    <property type="component" value="Chromosome"/>
</dbReference>
<dbReference type="GO" id="GO:0005829">
    <property type="term" value="C:cytosol"/>
    <property type="evidence" value="ECO:0007669"/>
    <property type="project" value="TreeGrafter"/>
</dbReference>
<dbReference type="GO" id="GO:0051537">
    <property type="term" value="F:2 iron, 2 sulfur cluster binding"/>
    <property type="evidence" value="ECO:0007669"/>
    <property type="project" value="UniProtKB-UniRule"/>
</dbReference>
<dbReference type="GO" id="GO:0004160">
    <property type="term" value="F:dihydroxy-acid dehydratase activity"/>
    <property type="evidence" value="ECO:0007669"/>
    <property type="project" value="UniProtKB-UniRule"/>
</dbReference>
<dbReference type="GO" id="GO:0000287">
    <property type="term" value="F:magnesium ion binding"/>
    <property type="evidence" value="ECO:0007669"/>
    <property type="project" value="UniProtKB-UniRule"/>
</dbReference>
<dbReference type="GO" id="GO:0009097">
    <property type="term" value="P:isoleucine biosynthetic process"/>
    <property type="evidence" value="ECO:0007669"/>
    <property type="project" value="UniProtKB-UniRule"/>
</dbReference>
<dbReference type="GO" id="GO:0009099">
    <property type="term" value="P:L-valine biosynthetic process"/>
    <property type="evidence" value="ECO:0007669"/>
    <property type="project" value="UniProtKB-UniRule"/>
</dbReference>
<dbReference type="FunFam" id="3.50.30.80:FF:000001">
    <property type="entry name" value="Dihydroxy-acid dehydratase"/>
    <property type="match status" value="1"/>
</dbReference>
<dbReference type="Gene3D" id="3.50.30.80">
    <property type="entry name" value="IlvD/EDD C-terminal domain-like"/>
    <property type="match status" value="1"/>
</dbReference>
<dbReference type="HAMAP" id="MF_00012">
    <property type="entry name" value="IlvD"/>
    <property type="match status" value="1"/>
</dbReference>
<dbReference type="InterPro" id="IPR042096">
    <property type="entry name" value="Dihydro-acid_dehy_C"/>
</dbReference>
<dbReference type="InterPro" id="IPR004404">
    <property type="entry name" value="DihydroxyA_deHydtase"/>
</dbReference>
<dbReference type="InterPro" id="IPR020558">
    <property type="entry name" value="DiOHA_6PGluconate_deHydtase_CS"/>
</dbReference>
<dbReference type="InterPro" id="IPR056740">
    <property type="entry name" value="ILV_EDD_C"/>
</dbReference>
<dbReference type="InterPro" id="IPR000581">
    <property type="entry name" value="ILV_EDD_N"/>
</dbReference>
<dbReference type="InterPro" id="IPR037237">
    <property type="entry name" value="IlvD/EDD_N"/>
</dbReference>
<dbReference type="NCBIfam" id="TIGR00110">
    <property type="entry name" value="ilvD"/>
    <property type="match status" value="1"/>
</dbReference>
<dbReference type="NCBIfam" id="NF002068">
    <property type="entry name" value="PRK00911.1"/>
    <property type="match status" value="1"/>
</dbReference>
<dbReference type="PANTHER" id="PTHR43661">
    <property type="entry name" value="D-XYLONATE DEHYDRATASE"/>
    <property type="match status" value="1"/>
</dbReference>
<dbReference type="PANTHER" id="PTHR43661:SF3">
    <property type="entry name" value="D-XYLONATE DEHYDRATASE YAGF-RELATED"/>
    <property type="match status" value="1"/>
</dbReference>
<dbReference type="Pfam" id="PF24877">
    <property type="entry name" value="ILV_EDD_C"/>
    <property type="match status" value="1"/>
</dbReference>
<dbReference type="Pfam" id="PF00920">
    <property type="entry name" value="ILVD_EDD_N"/>
    <property type="match status" value="1"/>
</dbReference>
<dbReference type="SUPFAM" id="SSF143975">
    <property type="entry name" value="IlvD/EDD N-terminal domain-like"/>
    <property type="match status" value="1"/>
</dbReference>
<dbReference type="SUPFAM" id="SSF52016">
    <property type="entry name" value="LeuD/IlvD-like"/>
    <property type="match status" value="1"/>
</dbReference>
<dbReference type="PROSITE" id="PS00886">
    <property type="entry name" value="ILVD_EDD_1"/>
    <property type="match status" value="1"/>
</dbReference>
<dbReference type="PROSITE" id="PS00887">
    <property type="entry name" value="ILVD_EDD_2"/>
    <property type="match status" value="1"/>
</dbReference>
<keyword id="KW-0001">2Fe-2S</keyword>
<keyword id="KW-0028">Amino-acid biosynthesis</keyword>
<keyword id="KW-0100">Branched-chain amino acid biosynthesis</keyword>
<keyword id="KW-0408">Iron</keyword>
<keyword id="KW-0411">Iron-sulfur</keyword>
<keyword id="KW-0456">Lyase</keyword>
<keyword id="KW-0460">Magnesium</keyword>
<keyword id="KW-0479">Metal-binding</keyword>
<keyword id="KW-1185">Reference proteome</keyword>